<organism>
    <name type="scientific">Bacillus subtilis (strain 168)</name>
    <dbReference type="NCBI Taxonomy" id="224308"/>
    <lineage>
        <taxon>Bacteria</taxon>
        <taxon>Bacillati</taxon>
        <taxon>Bacillota</taxon>
        <taxon>Bacilli</taxon>
        <taxon>Bacillales</taxon>
        <taxon>Bacillaceae</taxon>
        <taxon>Bacillus</taxon>
    </lineage>
</organism>
<evidence type="ECO:0000255" key="1"/>
<evidence type="ECO:0000269" key="2">
    <source>
    </source>
</evidence>
<evidence type="ECO:0000305" key="3"/>
<sequence length="473" mass="51633">MNKQGNQMSFLRTIILVSTFGGLLFGYDTGVLNGALPYMGEPDQLNLNAFTEGLVTSSLLFGAALGAVFGGRMSDFNGRRKNILFLAVIFFISTIGCTFAPNVTVMIISRFVLGIAVGGASVTVPAYLAEMSPVESRGRMVTQNELMIVSGQLLAFVFNAILGTTMGDNSHVWRFMLVIASLPALFLFFGMIRMPESPRWLVSKGRKEDALRVLKKIRDEKRAAAELQEIEFAFKKEDQLEKATFKDLSVPWVRRIVFIGLGIAIVQQITGVNSIMYYGTEILRNSGFQTEAALIGNIANGVISVLATFVGIWLLGRVGRRPMLMTGLIGTTTALLLIGIFSLVLEGSPALPYVVLSLTVTFLAFQQGAISPVTWLMLSEIFPLRLRGLGMGVTVFCLWMVNFAVSFTFPILLAAIGLSTTFFIFVGLGICSVLFVKRFLPETKGLSLEQLEENFRAYDHSGAKKDSGAEVIG</sequence>
<reference key="1">
    <citation type="journal article" date="1997" name="DNA Res.">
        <title>Sequence analysis of the groESL-cotA region of the Bacillus subtilis genome, containing the restriction/modification system genes.</title>
        <authorList>
            <person name="Kasahara Y."/>
            <person name="Nakai S."/>
            <person name="Ogasawara N."/>
            <person name="Yata K."/>
            <person name="Sadaie Y."/>
        </authorList>
    </citation>
    <scope>NUCLEOTIDE SEQUENCE [GENOMIC DNA]</scope>
    <source>
        <strain>168 / Marburg / ATCC 6051 / DSM 10 / JCM 1465 / NBRC 13719 / NCIMB 3610 / NRRL NRS-744 / VKM B-501</strain>
    </source>
</reference>
<reference key="2">
    <citation type="journal article" date="1997" name="Nature">
        <title>The complete genome sequence of the Gram-positive bacterium Bacillus subtilis.</title>
        <authorList>
            <person name="Kunst F."/>
            <person name="Ogasawara N."/>
            <person name="Moszer I."/>
            <person name="Albertini A.M."/>
            <person name="Alloni G."/>
            <person name="Azevedo V."/>
            <person name="Bertero M.G."/>
            <person name="Bessieres P."/>
            <person name="Bolotin A."/>
            <person name="Borchert S."/>
            <person name="Borriss R."/>
            <person name="Boursier L."/>
            <person name="Brans A."/>
            <person name="Braun M."/>
            <person name="Brignell S.C."/>
            <person name="Bron S."/>
            <person name="Brouillet S."/>
            <person name="Bruschi C.V."/>
            <person name="Caldwell B."/>
            <person name="Capuano V."/>
            <person name="Carter N.M."/>
            <person name="Choi S.-K."/>
            <person name="Codani J.-J."/>
            <person name="Connerton I.F."/>
            <person name="Cummings N.J."/>
            <person name="Daniel R.A."/>
            <person name="Denizot F."/>
            <person name="Devine K.M."/>
            <person name="Duesterhoeft A."/>
            <person name="Ehrlich S.D."/>
            <person name="Emmerson P.T."/>
            <person name="Entian K.-D."/>
            <person name="Errington J."/>
            <person name="Fabret C."/>
            <person name="Ferrari E."/>
            <person name="Foulger D."/>
            <person name="Fritz C."/>
            <person name="Fujita M."/>
            <person name="Fujita Y."/>
            <person name="Fuma S."/>
            <person name="Galizzi A."/>
            <person name="Galleron N."/>
            <person name="Ghim S.-Y."/>
            <person name="Glaser P."/>
            <person name="Goffeau A."/>
            <person name="Golightly E.J."/>
            <person name="Grandi G."/>
            <person name="Guiseppi G."/>
            <person name="Guy B.J."/>
            <person name="Haga K."/>
            <person name="Haiech J."/>
            <person name="Harwood C.R."/>
            <person name="Henaut A."/>
            <person name="Hilbert H."/>
            <person name="Holsappel S."/>
            <person name="Hosono S."/>
            <person name="Hullo M.-F."/>
            <person name="Itaya M."/>
            <person name="Jones L.-M."/>
            <person name="Joris B."/>
            <person name="Karamata D."/>
            <person name="Kasahara Y."/>
            <person name="Klaerr-Blanchard M."/>
            <person name="Klein C."/>
            <person name="Kobayashi Y."/>
            <person name="Koetter P."/>
            <person name="Koningstein G."/>
            <person name="Krogh S."/>
            <person name="Kumano M."/>
            <person name="Kurita K."/>
            <person name="Lapidus A."/>
            <person name="Lardinois S."/>
            <person name="Lauber J."/>
            <person name="Lazarevic V."/>
            <person name="Lee S.-M."/>
            <person name="Levine A."/>
            <person name="Liu H."/>
            <person name="Masuda S."/>
            <person name="Mauel C."/>
            <person name="Medigue C."/>
            <person name="Medina N."/>
            <person name="Mellado R.P."/>
            <person name="Mizuno M."/>
            <person name="Moestl D."/>
            <person name="Nakai S."/>
            <person name="Noback M."/>
            <person name="Noone D."/>
            <person name="O'Reilly M."/>
            <person name="Ogawa K."/>
            <person name="Ogiwara A."/>
            <person name="Oudega B."/>
            <person name="Park S.-H."/>
            <person name="Parro V."/>
            <person name="Pohl T.M."/>
            <person name="Portetelle D."/>
            <person name="Porwollik S."/>
            <person name="Prescott A.M."/>
            <person name="Presecan E."/>
            <person name="Pujic P."/>
            <person name="Purnelle B."/>
            <person name="Rapoport G."/>
            <person name="Rey M."/>
            <person name="Reynolds S."/>
            <person name="Rieger M."/>
            <person name="Rivolta C."/>
            <person name="Rocha E."/>
            <person name="Roche B."/>
            <person name="Rose M."/>
            <person name="Sadaie Y."/>
            <person name="Sato T."/>
            <person name="Scanlan E."/>
            <person name="Schleich S."/>
            <person name="Schroeter R."/>
            <person name="Scoffone F."/>
            <person name="Sekiguchi J."/>
            <person name="Sekowska A."/>
            <person name="Seror S.J."/>
            <person name="Serror P."/>
            <person name="Shin B.-S."/>
            <person name="Soldo B."/>
            <person name="Sorokin A."/>
            <person name="Tacconi E."/>
            <person name="Takagi T."/>
            <person name="Takahashi H."/>
            <person name="Takemaru K."/>
            <person name="Takeuchi M."/>
            <person name="Tamakoshi A."/>
            <person name="Tanaka T."/>
            <person name="Terpstra P."/>
            <person name="Tognoni A."/>
            <person name="Tosato V."/>
            <person name="Uchiyama S."/>
            <person name="Vandenbol M."/>
            <person name="Vannier F."/>
            <person name="Vassarotti A."/>
            <person name="Viari A."/>
            <person name="Wambutt R."/>
            <person name="Wedler E."/>
            <person name="Wedler H."/>
            <person name="Weitzenegger T."/>
            <person name="Winters P."/>
            <person name="Wipat A."/>
            <person name="Yamamoto H."/>
            <person name="Yamane K."/>
            <person name="Yasumoto K."/>
            <person name="Yata K."/>
            <person name="Yoshida K."/>
            <person name="Yoshikawa H.-F."/>
            <person name="Zumstein E."/>
            <person name="Yoshikawa H."/>
            <person name="Danchin A."/>
        </authorList>
    </citation>
    <scope>NUCLEOTIDE SEQUENCE [LARGE SCALE GENOMIC DNA]</scope>
    <source>
        <strain>168</strain>
    </source>
</reference>
<reference key="3">
    <citation type="journal article" date="2002" name="J. Bacteriol.">
        <title>Identification of two myo-inositol transporter genes of Bacillus subtilis.</title>
        <authorList>
            <person name="Yoshida K."/>
            <person name="Yamamoto Y."/>
            <person name="Omae K."/>
            <person name="Yamamoto M."/>
            <person name="Fujita Y."/>
        </authorList>
    </citation>
    <scope>FUNCTION</scope>
</reference>
<proteinExistence type="evidence at transcript level"/>
<gene>
    <name type="primary">iolT</name>
    <name type="synonym">ydjK</name>
    <name type="ordered locus">BSU06230</name>
</gene>
<keyword id="KW-1003">Cell membrane</keyword>
<keyword id="KW-0472">Membrane</keyword>
<keyword id="KW-1185">Reference proteome</keyword>
<keyword id="KW-0812">Transmembrane</keyword>
<keyword id="KW-1133">Transmembrane helix</keyword>
<keyword id="KW-0813">Transport</keyword>
<protein>
    <recommendedName>
        <fullName>Major myo-inositol transporter IolT</fullName>
    </recommendedName>
</protein>
<dbReference type="EMBL" id="AB007638">
    <property type="protein sequence ID" value="BAA22766.1"/>
    <property type="molecule type" value="Genomic_DNA"/>
</dbReference>
<dbReference type="EMBL" id="AL009126">
    <property type="protein sequence ID" value="CAB12442.1"/>
    <property type="molecule type" value="Genomic_DNA"/>
</dbReference>
<dbReference type="PIR" id="G69789">
    <property type="entry name" value="G69789"/>
</dbReference>
<dbReference type="RefSeq" id="NP_388504.1">
    <property type="nucleotide sequence ID" value="NC_000964.3"/>
</dbReference>
<dbReference type="RefSeq" id="WP_003234027.1">
    <property type="nucleotide sequence ID" value="NZ_OZ025638.1"/>
</dbReference>
<dbReference type="SMR" id="O34718"/>
<dbReference type="FunCoup" id="O34718">
    <property type="interactions" value="527"/>
</dbReference>
<dbReference type="STRING" id="224308.BSU06230"/>
<dbReference type="TCDB" id="2.A.1.1.26">
    <property type="family name" value="the major facilitator superfamily (mfs)"/>
</dbReference>
<dbReference type="PaxDb" id="224308-BSU06230"/>
<dbReference type="EnsemblBacteria" id="CAB12442">
    <property type="protein sequence ID" value="CAB12442"/>
    <property type="gene ID" value="BSU_06230"/>
</dbReference>
<dbReference type="GeneID" id="936014"/>
<dbReference type="KEGG" id="bsu:BSU06230"/>
<dbReference type="PATRIC" id="fig|224308.179.peg.675"/>
<dbReference type="eggNOG" id="COG2814">
    <property type="taxonomic scope" value="Bacteria"/>
</dbReference>
<dbReference type="InParanoid" id="O34718"/>
<dbReference type="OrthoDB" id="9783823at2"/>
<dbReference type="PhylomeDB" id="O34718"/>
<dbReference type="BioCyc" id="BSUB:BSU06230-MONOMER"/>
<dbReference type="UniPathway" id="UPA00076"/>
<dbReference type="Proteomes" id="UP000001570">
    <property type="component" value="Chromosome"/>
</dbReference>
<dbReference type="GO" id="GO:0016020">
    <property type="term" value="C:membrane"/>
    <property type="evidence" value="ECO:0000318"/>
    <property type="project" value="GO_Central"/>
</dbReference>
<dbReference type="GO" id="GO:0005886">
    <property type="term" value="C:plasma membrane"/>
    <property type="evidence" value="ECO:0007669"/>
    <property type="project" value="UniProtKB-SubCell"/>
</dbReference>
<dbReference type="GO" id="GO:0055056">
    <property type="term" value="F:D-glucose transmembrane transporter activity"/>
    <property type="evidence" value="ECO:0000318"/>
    <property type="project" value="GO_Central"/>
</dbReference>
<dbReference type="GO" id="GO:1904659">
    <property type="term" value="P:D-glucose transmembrane transport"/>
    <property type="evidence" value="ECO:0000318"/>
    <property type="project" value="GO_Central"/>
</dbReference>
<dbReference type="CDD" id="cd17359">
    <property type="entry name" value="MFS_XylE_like"/>
    <property type="match status" value="1"/>
</dbReference>
<dbReference type="FunFam" id="1.20.1250.20:FF:000073">
    <property type="entry name" value="MFS myo-inositol transporter, putative"/>
    <property type="match status" value="1"/>
</dbReference>
<dbReference type="Gene3D" id="1.20.1250.20">
    <property type="entry name" value="MFS general substrate transporter like domains"/>
    <property type="match status" value="1"/>
</dbReference>
<dbReference type="InterPro" id="IPR020846">
    <property type="entry name" value="MFS_dom"/>
</dbReference>
<dbReference type="InterPro" id="IPR005828">
    <property type="entry name" value="MFS_sugar_transport-like"/>
</dbReference>
<dbReference type="InterPro" id="IPR050820">
    <property type="entry name" value="MFS_Sugar_Transporter"/>
</dbReference>
<dbReference type="InterPro" id="IPR036259">
    <property type="entry name" value="MFS_trans_sf"/>
</dbReference>
<dbReference type="InterPro" id="IPR003663">
    <property type="entry name" value="Sugar/inositol_transpt"/>
</dbReference>
<dbReference type="InterPro" id="IPR005829">
    <property type="entry name" value="Sugar_transporter_CS"/>
</dbReference>
<dbReference type="InterPro" id="IPR047984">
    <property type="entry name" value="XylE-like"/>
</dbReference>
<dbReference type="NCBIfam" id="TIGR00879">
    <property type="entry name" value="SP"/>
    <property type="match status" value="1"/>
</dbReference>
<dbReference type="PANTHER" id="PTHR48023">
    <property type="entry name" value="D-XYLOSE-PROTON SYMPORTER-LIKE 2"/>
    <property type="match status" value="1"/>
</dbReference>
<dbReference type="PANTHER" id="PTHR48023:SF4">
    <property type="entry name" value="D-XYLOSE-PROTON SYMPORTER-LIKE 2"/>
    <property type="match status" value="1"/>
</dbReference>
<dbReference type="Pfam" id="PF00083">
    <property type="entry name" value="Sugar_tr"/>
    <property type="match status" value="1"/>
</dbReference>
<dbReference type="PRINTS" id="PR00171">
    <property type="entry name" value="SUGRTRNSPORT"/>
</dbReference>
<dbReference type="SUPFAM" id="SSF103473">
    <property type="entry name" value="MFS general substrate transporter"/>
    <property type="match status" value="1"/>
</dbReference>
<dbReference type="PROSITE" id="PS50850">
    <property type="entry name" value="MFS"/>
    <property type="match status" value="1"/>
</dbReference>
<dbReference type="PROSITE" id="PS00217">
    <property type="entry name" value="SUGAR_TRANSPORT_2"/>
    <property type="match status" value="1"/>
</dbReference>
<feature type="chain" id="PRO_0000050305" description="Major myo-inositol transporter IolT">
    <location>
        <begin position="1"/>
        <end position="473"/>
    </location>
</feature>
<feature type="transmembrane region" description="Helical" evidence="1">
    <location>
        <begin position="14"/>
        <end position="34"/>
    </location>
</feature>
<feature type="transmembrane region" description="Helical" evidence="1">
    <location>
        <begin position="49"/>
        <end position="69"/>
    </location>
</feature>
<feature type="transmembrane region" description="Helical" evidence="1">
    <location>
        <begin position="83"/>
        <end position="103"/>
    </location>
</feature>
<feature type="transmembrane region" description="Helical" evidence="1">
    <location>
        <begin position="111"/>
        <end position="131"/>
    </location>
</feature>
<feature type="transmembrane region" description="Helical" evidence="1">
    <location>
        <begin position="146"/>
        <end position="166"/>
    </location>
</feature>
<feature type="transmembrane region" description="Helical" evidence="1">
    <location>
        <begin position="172"/>
        <end position="192"/>
    </location>
</feature>
<feature type="transmembrane region" description="Helical" evidence="1">
    <location>
        <begin position="256"/>
        <end position="276"/>
    </location>
</feature>
<feature type="transmembrane region" description="Helical" evidence="1">
    <location>
        <begin position="295"/>
        <end position="315"/>
    </location>
</feature>
<feature type="transmembrane region" description="Helical" evidence="1">
    <location>
        <begin position="325"/>
        <end position="345"/>
    </location>
</feature>
<feature type="transmembrane region" description="Helical" evidence="1">
    <location>
        <begin position="350"/>
        <end position="370"/>
    </location>
</feature>
<feature type="transmembrane region" description="Helical" evidence="1">
    <location>
        <begin position="389"/>
        <end position="409"/>
    </location>
</feature>
<feature type="transmembrane region" description="Helical" evidence="1">
    <location>
        <begin position="411"/>
        <end position="431"/>
    </location>
</feature>
<comment type="function">
    <text evidence="2">Major myo-inositol uptake transporter.</text>
</comment>
<comment type="pathway">
    <text>Polyol metabolism; myo-inositol degradation into acetyl-CoA.</text>
</comment>
<comment type="subcellular location">
    <subcellularLocation>
        <location evidence="3">Cell membrane</location>
        <topology evidence="3">Multi-pass membrane protein</topology>
    </subcellularLocation>
</comment>
<comment type="induction">
    <text>Negatively regulated by IolR. Induced by inositol.</text>
</comment>
<comment type="miscellaneous">
    <text>When iolT is inactivated, inositol uptake is almost abolished even though iolF is active.</text>
</comment>
<comment type="similarity">
    <text evidence="3">Belongs to the major facilitator superfamily. Sugar transporter (TC 2.A.1.1) family.</text>
</comment>
<accession>O34718</accession>
<accession>Q797C3</accession>
<name>IOLT_BACSU</name>